<comment type="function">
    <text evidence="2">Cysteine desulfurases mobilize the sulfur from L-cysteine to yield L-alanine, an essential step in sulfur metabolism for biosynthesis of a variety of sulfur-containing biomolecules. Component of the suf operon, which is activated and required under specific conditions such as oxidative stress and iron limitation. Acts as a potent selenocysteine lyase in vitro, that mobilizes selenium from L-selenocysteine. Selenocysteine lyase activity is however unsure in vivo.</text>
</comment>
<comment type="catalytic activity">
    <reaction>
        <text>(sulfur carrier)-H + L-cysteine = (sulfur carrier)-SH + L-alanine</text>
        <dbReference type="Rhea" id="RHEA:43892"/>
        <dbReference type="Rhea" id="RHEA-COMP:14737"/>
        <dbReference type="Rhea" id="RHEA-COMP:14739"/>
        <dbReference type="ChEBI" id="CHEBI:29917"/>
        <dbReference type="ChEBI" id="CHEBI:35235"/>
        <dbReference type="ChEBI" id="CHEBI:57972"/>
        <dbReference type="ChEBI" id="CHEBI:64428"/>
        <dbReference type="EC" id="2.8.1.7"/>
    </reaction>
</comment>
<comment type="catalytic activity">
    <reaction>
        <text>L-selenocysteine + AH2 = hydrogenselenide + L-alanine + A + H(+)</text>
        <dbReference type="Rhea" id="RHEA:11632"/>
        <dbReference type="ChEBI" id="CHEBI:13193"/>
        <dbReference type="ChEBI" id="CHEBI:15378"/>
        <dbReference type="ChEBI" id="CHEBI:17499"/>
        <dbReference type="ChEBI" id="CHEBI:29317"/>
        <dbReference type="ChEBI" id="CHEBI:57843"/>
        <dbReference type="ChEBI" id="CHEBI:57972"/>
        <dbReference type="EC" id="4.4.1.16"/>
    </reaction>
</comment>
<comment type="cofactor">
    <cofactor evidence="1">
        <name>pyridoxal 5'-phosphate</name>
        <dbReference type="ChEBI" id="CHEBI:597326"/>
    </cofactor>
</comment>
<comment type="pathway">
    <text>Cofactor biosynthesis; iron-sulfur cluster biosynthesis.</text>
</comment>
<comment type="subunit">
    <text evidence="1">Homodimer. Interacts with SufE and the SufBCD complex composed of SufB, SufC and SufD. The interaction with SufE is required to mediate the direct transfer of the sulfur atom from the S-sulfanylcysteine (By similarity).</text>
</comment>
<comment type="interaction">
    <interactant intactId="EBI-2121573">
        <id>Q9EXP2</id>
    </interactant>
    <interactant intactId="EBI-2121567">
        <id>Q9EXP1</id>
        <label>sufE</label>
    </interactant>
    <organismsDiffer>false</organismsDiffer>
    <experiments>3</experiments>
</comment>
<comment type="subcellular location">
    <subcellularLocation>
        <location evidence="2">Cytoplasm</location>
    </subcellularLocation>
</comment>
<comment type="similarity">
    <text evidence="3">Belongs to the class-V pyridoxal-phosphate-dependent aminotransferase family. Csd subfamily.</text>
</comment>
<reference key="1">
    <citation type="journal article" date="2001" name="Mol. Microbiol.">
        <title>SoxR-dependent response to oxidative stress and virulence of Erwinia chrysanthemi: the key role of SufC, an orphan ABC ATPase.</title>
        <authorList>
            <person name="Nachin L."/>
            <person name="El Hassouni M."/>
            <person name="Loiseau L."/>
            <person name="Expert D."/>
            <person name="Barras F."/>
        </authorList>
    </citation>
    <scope>NUCLEOTIDE SEQUENCE [GENOMIC DNA]</scope>
    <source>
        <strain>3937</strain>
    </source>
</reference>
<reference key="2">
    <citation type="journal article" date="2011" name="J. Bacteriol.">
        <title>Genome sequence of the plant-pathogenic bacterium Dickeya dadantii 3937.</title>
        <authorList>
            <person name="Glasner J.D."/>
            <person name="Yang C.H."/>
            <person name="Reverchon S."/>
            <person name="Hugouvieux-Cotte-Pattat N."/>
            <person name="Condemine G."/>
            <person name="Bohin J.P."/>
            <person name="Van Gijsegem F."/>
            <person name="Yang S."/>
            <person name="Franza T."/>
            <person name="Expert D."/>
            <person name="Plunkett G. III"/>
            <person name="San Francisco M.J."/>
            <person name="Charkowski A.O."/>
            <person name="Py B."/>
            <person name="Bell K."/>
            <person name="Rauscher L."/>
            <person name="Rodriguez-Palenzuela P."/>
            <person name="Toussaint A."/>
            <person name="Holeva M.C."/>
            <person name="He S.Y."/>
            <person name="Douet V."/>
            <person name="Boccara M."/>
            <person name="Blanco C."/>
            <person name="Toth I."/>
            <person name="Anderson B.D."/>
            <person name="Biehl B.S."/>
            <person name="Mau B."/>
            <person name="Flynn S.M."/>
            <person name="Barras F."/>
            <person name="Lindeberg M."/>
            <person name="Birch P.R."/>
            <person name="Tsuyumu S."/>
            <person name="Shi X."/>
            <person name="Hibbing M."/>
            <person name="Yap M.N."/>
            <person name="Carpentier M."/>
            <person name="Dassa E."/>
            <person name="Umehara M."/>
            <person name="Kim J.F."/>
            <person name="Rusch M."/>
            <person name="Soni P."/>
            <person name="Mayhew G.F."/>
            <person name="Fouts D.E."/>
            <person name="Gill S.R."/>
            <person name="Blattner F.R."/>
            <person name="Keen N.T."/>
            <person name="Perna N.T."/>
        </authorList>
    </citation>
    <scope>NUCLEOTIDE SEQUENCE [LARGE SCALE GENOMIC DNA]</scope>
    <source>
        <strain>3937</strain>
    </source>
</reference>
<reference key="3">
    <citation type="journal article" date="2003" name="J. Biol. Chem.">
        <title>Biogenesis of Fe-S cluster by the bacterial Suf system: SufS and SufE form a new type of cysteine desulfurase.</title>
        <authorList>
            <person name="Loiseau L."/>
            <person name="Ollagnier-de-Choudens S."/>
            <person name="Nachin L."/>
            <person name="Fontecave M."/>
            <person name="Barras F."/>
        </authorList>
    </citation>
    <scope>FUNCTION</scope>
    <scope>PROBABLE ACTIVE SITE</scope>
    <scope>SUBCELLULAR LOCATION</scope>
    <scope>INTERACTION WITH SUFE</scope>
    <scope>MUTAGENESIS OF CYS-369</scope>
    <source>
        <strain>3937</strain>
    </source>
</reference>
<dbReference type="EC" id="2.8.1.7"/>
<dbReference type="EC" id="4.4.1.16"/>
<dbReference type="EMBL" id="AJ301654">
    <property type="protein sequence ID" value="CAC17128.1"/>
    <property type="molecule type" value="Genomic_DNA"/>
</dbReference>
<dbReference type="EMBL" id="CP002038">
    <property type="protein sequence ID" value="ADM98916.1"/>
    <property type="molecule type" value="Genomic_DNA"/>
</dbReference>
<dbReference type="RefSeq" id="WP_013318359.1">
    <property type="nucleotide sequence ID" value="NC_014500.1"/>
</dbReference>
<dbReference type="SMR" id="Q9EXP2"/>
<dbReference type="IntAct" id="Q9EXP2">
    <property type="interactions" value="1"/>
</dbReference>
<dbReference type="STRING" id="198628.Dda3937_03665"/>
<dbReference type="KEGG" id="ddd:Dda3937_03665"/>
<dbReference type="PATRIC" id="fig|198628.6.peg.2706"/>
<dbReference type="eggNOG" id="COG0520">
    <property type="taxonomic scope" value="Bacteria"/>
</dbReference>
<dbReference type="HOGENOM" id="CLU_003433_2_5_6"/>
<dbReference type="OrthoDB" id="9808002at2"/>
<dbReference type="UniPathway" id="UPA00266"/>
<dbReference type="Proteomes" id="UP000006859">
    <property type="component" value="Chromosome"/>
</dbReference>
<dbReference type="GO" id="GO:0005737">
    <property type="term" value="C:cytoplasm"/>
    <property type="evidence" value="ECO:0007669"/>
    <property type="project" value="UniProtKB-SubCell"/>
</dbReference>
<dbReference type="GO" id="GO:0031071">
    <property type="term" value="F:cysteine desulfurase activity"/>
    <property type="evidence" value="ECO:0007669"/>
    <property type="project" value="UniProtKB-UniRule"/>
</dbReference>
<dbReference type="GO" id="GO:0030170">
    <property type="term" value="F:pyridoxal phosphate binding"/>
    <property type="evidence" value="ECO:0007669"/>
    <property type="project" value="InterPro"/>
</dbReference>
<dbReference type="GO" id="GO:0009000">
    <property type="term" value="F:selenocysteine lyase activity"/>
    <property type="evidence" value="ECO:0007669"/>
    <property type="project" value="UniProtKB-UniRule"/>
</dbReference>
<dbReference type="GO" id="GO:0006534">
    <property type="term" value="P:cysteine metabolic process"/>
    <property type="evidence" value="ECO:0007669"/>
    <property type="project" value="InterPro"/>
</dbReference>
<dbReference type="CDD" id="cd06453">
    <property type="entry name" value="SufS_like"/>
    <property type="match status" value="1"/>
</dbReference>
<dbReference type="Gene3D" id="3.90.1150.10">
    <property type="entry name" value="Aspartate Aminotransferase, domain 1"/>
    <property type="match status" value="1"/>
</dbReference>
<dbReference type="Gene3D" id="3.40.640.10">
    <property type="entry name" value="Type I PLP-dependent aspartate aminotransferase-like (Major domain)"/>
    <property type="match status" value="1"/>
</dbReference>
<dbReference type="HAMAP" id="MF_01831">
    <property type="entry name" value="SufS_aminotrans_5"/>
    <property type="match status" value="1"/>
</dbReference>
<dbReference type="InterPro" id="IPR000192">
    <property type="entry name" value="Aminotrans_V_dom"/>
</dbReference>
<dbReference type="InterPro" id="IPR020578">
    <property type="entry name" value="Aminotrans_V_PyrdxlP_BS"/>
</dbReference>
<dbReference type="InterPro" id="IPR010970">
    <property type="entry name" value="Cys_dSase_SufS"/>
</dbReference>
<dbReference type="InterPro" id="IPR015424">
    <property type="entry name" value="PyrdxlP-dep_Trfase"/>
</dbReference>
<dbReference type="InterPro" id="IPR015421">
    <property type="entry name" value="PyrdxlP-dep_Trfase_major"/>
</dbReference>
<dbReference type="InterPro" id="IPR015422">
    <property type="entry name" value="PyrdxlP-dep_Trfase_small"/>
</dbReference>
<dbReference type="NCBIfam" id="NF006791">
    <property type="entry name" value="PRK09295.1"/>
    <property type="match status" value="1"/>
</dbReference>
<dbReference type="NCBIfam" id="TIGR01979">
    <property type="entry name" value="sufS"/>
    <property type="match status" value="1"/>
</dbReference>
<dbReference type="PANTHER" id="PTHR43586">
    <property type="entry name" value="CYSTEINE DESULFURASE"/>
    <property type="match status" value="1"/>
</dbReference>
<dbReference type="PANTHER" id="PTHR43586:SF25">
    <property type="entry name" value="CYSTEINE DESULFURASE"/>
    <property type="match status" value="1"/>
</dbReference>
<dbReference type="Pfam" id="PF00266">
    <property type="entry name" value="Aminotran_5"/>
    <property type="match status" value="1"/>
</dbReference>
<dbReference type="SUPFAM" id="SSF53383">
    <property type="entry name" value="PLP-dependent transferases"/>
    <property type="match status" value="1"/>
</dbReference>
<dbReference type="PROSITE" id="PS00595">
    <property type="entry name" value="AA_TRANSFER_CLASS_5"/>
    <property type="match status" value="1"/>
</dbReference>
<evidence type="ECO:0000250" key="1"/>
<evidence type="ECO:0000269" key="2">
    <source>
    </source>
</evidence>
<evidence type="ECO:0000305" key="3"/>
<evidence type="ECO:0000305" key="4">
    <source>
    </source>
</evidence>
<proteinExistence type="evidence at protein level"/>
<organism>
    <name type="scientific">Dickeya dadantii (strain 3937)</name>
    <name type="common">Erwinia chrysanthemi (strain 3937)</name>
    <dbReference type="NCBI Taxonomy" id="198628"/>
    <lineage>
        <taxon>Bacteria</taxon>
        <taxon>Pseudomonadati</taxon>
        <taxon>Pseudomonadota</taxon>
        <taxon>Gammaproteobacteria</taxon>
        <taxon>Enterobacterales</taxon>
        <taxon>Pectobacteriaceae</taxon>
        <taxon>Dickeya</taxon>
    </lineage>
</organism>
<keyword id="KW-0963">Cytoplasm</keyword>
<keyword id="KW-0456">Lyase</keyword>
<keyword id="KW-0663">Pyridoxal phosphate</keyword>
<keyword id="KW-1185">Reference proteome</keyword>
<keyword id="KW-0808">Transferase</keyword>
<gene>
    <name type="primary">sufS</name>
    <name type="ordered locus">Dda3937_03665</name>
</gene>
<sequence length="412" mass="44785">MNYPVEHYPIDRVRADFPILQQSVNGQPLAYLDSAASAQKPLAVIDRERDFYLHEYAAVHRGIHTLSARATSAMEEVRAKVATFIHAASAEDIVFVRGTTEAINLVANSYGRTAFQPGDNLVISEMEHHANIVPWQMLAQARGLTLRVLPITDDGELDMAQLPALLDERTRLVAVTQVSNVLGTVNPLAEIIRQAHACGAKVLVDGAQAVMHQAVDVQALDCDFYAFSGHKLYGPSGIGVLYGKSELLQAMPPWEGGGAMIREVSLTQGTTYADPPWRFEAGSPHVAGIIGLGAALDYVSALGVDAIQAHEGLLMRYALASLAEVPTLRLYGPVHRQGVIAFNLGRHHAFDVGSFLDQYGIAIRTGHHCAMPLMSRYGVPSMCRASLALYSCQDEIDRLVAGLHRIHRLLGE</sequence>
<feature type="chain" id="PRO_0000150332" description="Cysteine desulfurase">
    <location>
        <begin position="1"/>
        <end position="412"/>
    </location>
</feature>
<feature type="active site" description="Cysteine persulfide intermediate" evidence="4">
    <location>
        <position position="369"/>
    </location>
</feature>
<feature type="modified residue" description="N6-(pyridoxal phosphate)lysine" evidence="1">
    <location>
        <position position="231"/>
    </location>
</feature>
<feature type="mutagenesis site" description="Abolishes activity." evidence="2">
    <original>C</original>
    <variation>S</variation>
    <location>
        <position position="369"/>
    </location>
</feature>
<name>SUFS_DICD3</name>
<protein>
    <recommendedName>
        <fullName>Cysteine desulfurase</fullName>
        <ecNumber>2.8.1.7</ecNumber>
    </recommendedName>
    <alternativeName>
        <fullName>Selenocysteine beta-lyase</fullName>
        <shortName>SCL</shortName>
    </alternativeName>
    <alternativeName>
        <fullName>Selenocysteine lyase</fullName>
        <ecNumber>4.4.1.16</ecNumber>
    </alternativeName>
    <alternativeName>
        <fullName>Selenocysteine reductase</fullName>
    </alternativeName>
</protein>
<accession>Q9EXP2</accession>
<accession>E0SGT8</accession>